<protein>
    <recommendedName>
        <fullName>mRNA 3'-end-processing protein yth-1</fullName>
    </recommendedName>
</protein>
<comment type="function">
    <text evidence="1">Component of the cleavage factor I (CF I) involved in pre-mRNA 3'-end processing.</text>
</comment>
<comment type="subcellular location">
    <subcellularLocation>
        <location evidence="1">Nucleus</location>
    </subcellularLocation>
</comment>
<comment type="similarity">
    <text evidence="4">Belongs to the CPSF4/YTH1 family.</text>
</comment>
<keyword id="KW-0479">Metal-binding</keyword>
<keyword id="KW-0507">mRNA processing</keyword>
<keyword id="KW-0539">Nucleus</keyword>
<keyword id="KW-1185">Reference proteome</keyword>
<keyword id="KW-0677">Repeat</keyword>
<keyword id="KW-0694">RNA-binding</keyword>
<keyword id="KW-0862">Zinc</keyword>
<keyword id="KW-0863">Zinc-finger</keyword>
<dbReference type="EMBL" id="CM002236">
    <property type="protein sequence ID" value="EAA36020.1"/>
    <property type="molecule type" value="Genomic_DNA"/>
</dbReference>
<dbReference type="RefSeq" id="XP_965256.1">
    <property type="nucleotide sequence ID" value="XM_960163.2"/>
</dbReference>
<dbReference type="STRING" id="367110.Q7SGR2"/>
<dbReference type="PaxDb" id="5141-EFNCRP00000006432"/>
<dbReference type="EnsemblFungi" id="EAA36020">
    <property type="protein sequence ID" value="EAA36020"/>
    <property type="gene ID" value="NCU08353"/>
</dbReference>
<dbReference type="GeneID" id="3881396"/>
<dbReference type="KEGG" id="ncr:NCU08353"/>
<dbReference type="VEuPathDB" id="FungiDB:NCU08353"/>
<dbReference type="HOGENOM" id="CLU_024513_1_0_1"/>
<dbReference type="InParanoid" id="Q7SGR2"/>
<dbReference type="OMA" id="SLVCKHY"/>
<dbReference type="OrthoDB" id="1914176at2759"/>
<dbReference type="Proteomes" id="UP000001805">
    <property type="component" value="Chromosome 1, Linkage Group I"/>
</dbReference>
<dbReference type="GO" id="GO:0005634">
    <property type="term" value="C:nucleus"/>
    <property type="evidence" value="ECO:0007669"/>
    <property type="project" value="UniProtKB-SubCell"/>
</dbReference>
<dbReference type="GO" id="GO:0003723">
    <property type="term" value="F:RNA binding"/>
    <property type="evidence" value="ECO:0007669"/>
    <property type="project" value="UniProtKB-KW"/>
</dbReference>
<dbReference type="GO" id="GO:0008270">
    <property type="term" value="F:zinc ion binding"/>
    <property type="evidence" value="ECO:0007669"/>
    <property type="project" value="UniProtKB-KW"/>
</dbReference>
<dbReference type="GO" id="GO:0006397">
    <property type="term" value="P:mRNA processing"/>
    <property type="evidence" value="ECO:0007669"/>
    <property type="project" value="UniProtKB-KW"/>
</dbReference>
<dbReference type="FunFam" id="4.10.1000.10:FF:000012">
    <property type="entry name" value="cleavage and polyadenylation specificity factor subunit 4"/>
    <property type="match status" value="1"/>
</dbReference>
<dbReference type="Gene3D" id="3.30.1370.210">
    <property type="match status" value="1"/>
</dbReference>
<dbReference type="Gene3D" id="4.10.1000.10">
    <property type="entry name" value="Zinc finger, CCCH-type"/>
    <property type="match status" value="1"/>
</dbReference>
<dbReference type="InterPro" id="IPR045348">
    <property type="entry name" value="CPSF4/Yth1"/>
</dbReference>
<dbReference type="InterPro" id="IPR000571">
    <property type="entry name" value="Znf_CCCH"/>
</dbReference>
<dbReference type="InterPro" id="IPR036855">
    <property type="entry name" value="Znf_CCCH_sf"/>
</dbReference>
<dbReference type="PANTHER" id="PTHR23102:SF24">
    <property type="entry name" value="CLEAVAGE AND POLYADENYLATION SPECIFICITY FACTOR SUBUNIT 4"/>
    <property type="match status" value="1"/>
</dbReference>
<dbReference type="PANTHER" id="PTHR23102">
    <property type="entry name" value="CLEAVAGE AND POLYADENYLATION SPECIFICITY FACTOR SUBUNIT 4-RELATED"/>
    <property type="match status" value="1"/>
</dbReference>
<dbReference type="Pfam" id="PF00642">
    <property type="entry name" value="zf-CCCH"/>
    <property type="match status" value="2"/>
</dbReference>
<dbReference type="Pfam" id="PF14608">
    <property type="entry name" value="zf-CCCH_2"/>
    <property type="match status" value="2"/>
</dbReference>
<dbReference type="SMART" id="SM00356">
    <property type="entry name" value="ZnF_C3H1"/>
    <property type="match status" value="4"/>
</dbReference>
<dbReference type="SUPFAM" id="SSF90229">
    <property type="entry name" value="CCCH zinc finger"/>
    <property type="match status" value="2"/>
</dbReference>
<dbReference type="PROSITE" id="PS50103">
    <property type="entry name" value="ZF_C3H1"/>
    <property type="match status" value="5"/>
</dbReference>
<evidence type="ECO:0000250" key="1"/>
<evidence type="ECO:0000255" key="2">
    <source>
        <dbReference type="PROSITE-ProRule" id="PRU00723"/>
    </source>
</evidence>
<evidence type="ECO:0000256" key="3">
    <source>
        <dbReference type="SAM" id="MobiDB-lite"/>
    </source>
</evidence>
<evidence type="ECO:0000305" key="4"/>
<gene>
    <name type="primary">yth-1</name>
    <name type="ORF">NCU08353</name>
</gene>
<feature type="chain" id="PRO_0000238541" description="mRNA 3'-end-processing protein yth-1">
    <location>
        <begin position="1"/>
        <end position="317"/>
    </location>
</feature>
<feature type="zinc finger region" description="C3H1-type 1" evidence="2">
    <location>
        <begin position="51"/>
        <end position="78"/>
    </location>
</feature>
<feature type="zinc finger region" description="C3H1-type 2" evidence="2">
    <location>
        <begin position="93"/>
        <end position="120"/>
    </location>
</feature>
<feature type="zinc finger region" description="C3H1-type 3" evidence="2">
    <location>
        <begin position="121"/>
        <end position="149"/>
    </location>
</feature>
<feature type="zinc finger region" description="C3H1-type 4" evidence="2">
    <location>
        <begin position="150"/>
        <end position="177"/>
    </location>
</feature>
<feature type="zinc finger region" description="C3H1-type 5" evidence="2">
    <location>
        <begin position="179"/>
        <end position="202"/>
    </location>
</feature>
<feature type="region of interest" description="Disordered" evidence="3">
    <location>
        <begin position="1"/>
        <end position="20"/>
    </location>
</feature>
<feature type="region of interest" description="Disordered" evidence="3">
    <location>
        <begin position="202"/>
        <end position="317"/>
    </location>
</feature>
<feature type="compositionally biased region" description="Basic and acidic residues" evidence="3">
    <location>
        <begin position="202"/>
        <end position="217"/>
    </location>
</feature>
<feature type="compositionally biased region" description="Low complexity" evidence="3">
    <location>
        <begin position="223"/>
        <end position="237"/>
    </location>
</feature>
<feature type="compositionally biased region" description="Basic and acidic residues" evidence="3">
    <location>
        <begin position="253"/>
        <end position="288"/>
    </location>
</feature>
<feature type="compositionally biased region" description="Gly residues" evidence="3">
    <location>
        <begin position="289"/>
        <end position="301"/>
    </location>
</feature>
<feature type="compositionally biased region" description="Basic residues" evidence="3">
    <location>
        <begin position="302"/>
        <end position="317"/>
    </location>
</feature>
<accession>Q7SGR2</accession>
<name>YTH1_NEUCR</name>
<organism>
    <name type="scientific">Neurospora crassa (strain ATCC 24698 / 74-OR23-1A / CBS 708.71 / DSM 1257 / FGSC 987)</name>
    <dbReference type="NCBI Taxonomy" id="367110"/>
    <lineage>
        <taxon>Eukaryota</taxon>
        <taxon>Fungi</taxon>
        <taxon>Dikarya</taxon>
        <taxon>Ascomycota</taxon>
        <taxon>Pezizomycotina</taxon>
        <taxon>Sordariomycetes</taxon>
        <taxon>Sordariomycetidae</taxon>
        <taxon>Sordariales</taxon>
        <taxon>Sordariaceae</taxon>
        <taxon>Neurospora</taxon>
    </lineage>
</organism>
<reference key="1">
    <citation type="journal article" date="2003" name="Nature">
        <title>The genome sequence of the filamentous fungus Neurospora crassa.</title>
        <authorList>
            <person name="Galagan J.E."/>
            <person name="Calvo S.E."/>
            <person name="Borkovich K.A."/>
            <person name="Selker E.U."/>
            <person name="Read N.D."/>
            <person name="Jaffe D.B."/>
            <person name="FitzHugh W."/>
            <person name="Ma L.-J."/>
            <person name="Smirnov S."/>
            <person name="Purcell S."/>
            <person name="Rehman B."/>
            <person name="Elkins T."/>
            <person name="Engels R."/>
            <person name="Wang S."/>
            <person name="Nielsen C.B."/>
            <person name="Butler J."/>
            <person name="Endrizzi M."/>
            <person name="Qui D."/>
            <person name="Ianakiev P."/>
            <person name="Bell-Pedersen D."/>
            <person name="Nelson M.A."/>
            <person name="Werner-Washburne M."/>
            <person name="Selitrennikoff C.P."/>
            <person name="Kinsey J.A."/>
            <person name="Braun E.L."/>
            <person name="Zelter A."/>
            <person name="Schulte U."/>
            <person name="Kothe G.O."/>
            <person name="Jedd G."/>
            <person name="Mewes H.-W."/>
            <person name="Staben C."/>
            <person name="Marcotte E."/>
            <person name="Greenberg D."/>
            <person name="Roy A."/>
            <person name="Foley K."/>
            <person name="Naylor J."/>
            <person name="Stange-Thomann N."/>
            <person name="Barrett R."/>
            <person name="Gnerre S."/>
            <person name="Kamal M."/>
            <person name="Kamvysselis M."/>
            <person name="Mauceli E.W."/>
            <person name="Bielke C."/>
            <person name="Rudd S."/>
            <person name="Frishman D."/>
            <person name="Krystofova S."/>
            <person name="Rasmussen C."/>
            <person name="Metzenberg R.L."/>
            <person name="Perkins D.D."/>
            <person name="Kroken S."/>
            <person name="Cogoni C."/>
            <person name="Macino G."/>
            <person name="Catcheside D.E.A."/>
            <person name="Li W."/>
            <person name="Pratt R.J."/>
            <person name="Osmani S.A."/>
            <person name="DeSouza C.P.C."/>
            <person name="Glass N.L."/>
            <person name="Orbach M.J."/>
            <person name="Berglund J.A."/>
            <person name="Voelker R."/>
            <person name="Yarden O."/>
            <person name="Plamann M."/>
            <person name="Seiler S."/>
            <person name="Dunlap J.C."/>
            <person name="Radford A."/>
            <person name="Aramayo R."/>
            <person name="Natvig D.O."/>
            <person name="Alex L.A."/>
            <person name="Mannhaupt G."/>
            <person name="Ebbole D.J."/>
            <person name="Freitag M."/>
            <person name="Paulsen I."/>
            <person name="Sachs M.S."/>
            <person name="Lander E.S."/>
            <person name="Nusbaum C."/>
            <person name="Birren B.W."/>
        </authorList>
    </citation>
    <scope>NUCLEOTIDE SEQUENCE [LARGE SCALE GENOMIC DNA]</scope>
    <source>
        <strain>ATCC 24698 / 74-OR23-1A / CBS 708.71 / DSM 1257 / FGSC 987</strain>
    </source>
</reference>
<proteinExistence type="inferred from homology"/>
<sequence>MATTTQTTTNSLPSGAGGPQQLVTQMLNHTAPHYTFSFTPFLQRTYQHSLPADRPICKAYASGNCPLKSHCPERHVTASSQNTHGGGNTFSGGFGSLVCKHWLRGLCKKGESCEFLHEYNLRKMPECNFFVRNGYCSNGDECLYLHIDPLSRLPPCPHYERGFCPLGPRCDKKHFRRKLCLYYLAGFCPDGKGCKEGAHPRWTADKDMEKPRAKGEGDQMLLQQQQQQQQQQHMGDANGMGGGMAQATGANEYMDRERERDRDNREREMMMQGRDRDGGGHDRHKDRFGGGGGGGGGGRGRGGWRGRGRGGFRGKGH</sequence>